<organism>
    <name type="scientific">Escherichia coli (strain K12 / DH10B)</name>
    <dbReference type="NCBI Taxonomy" id="316385"/>
    <lineage>
        <taxon>Bacteria</taxon>
        <taxon>Pseudomonadati</taxon>
        <taxon>Pseudomonadota</taxon>
        <taxon>Gammaproteobacteria</taxon>
        <taxon>Enterobacterales</taxon>
        <taxon>Enterobacteriaceae</taxon>
        <taxon>Escherichia</taxon>
    </lineage>
</organism>
<feature type="chain" id="PRO_1000128745" description="Large ribosomal subunit protein bL27">
    <location>
        <begin position="1"/>
        <end position="85"/>
    </location>
</feature>
<feature type="region of interest" description="Disordered" evidence="2">
    <location>
        <begin position="1"/>
        <end position="20"/>
    </location>
</feature>
<protein>
    <recommendedName>
        <fullName evidence="1">Large ribosomal subunit protein bL27</fullName>
    </recommendedName>
    <alternativeName>
        <fullName evidence="3">50S ribosomal protein L27</fullName>
    </alternativeName>
</protein>
<accession>B1XHG1</accession>
<sequence>MAHKKAGGSTRNGRDSEAKRLGVKRFGGESVLAGSIIVRQRGTKFHAGANVGCGRDHTLFAKADGKVKFEVKGPKNRKFISIEAE</sequence>
<gene>
    <name evidence="1" type="primary">rpmA</name>
    <name type="ordered locus">ECDH10B_3359</name>
</gene>
<name>RL27_ECODH</name>
<evidence type="ECO:0000255" key="1">
    <source>
        <dbReference type="HAMAP-Rule" id="MF_00539"/>
    </source>
</evidence>
<evidence type="ECO:0000256" key="2">
    <source>
        <dbReference type="SAM" id="MobiDB-lite"/>
    </source>
</evidence>
<evidence type="ECO:0000305" key="3"/>
<comment type="similarity">
    <text evidence="1">Belongs to the bacterial ribosomal protein bL27 family.</text>
</comment>
<reference key="1">
    <citation type="journal article" date="2008" name="J. Bacteriol.">
        <title>The complete genome sequence of Escherichia coli DH10B: insights into the biology of a laboratory workhorse.</title>
        <authorList>
            <person name="Durfee T."/>
            <person name="Nelson R."/>
            <person name="Baldwin S."/>
            <person name="Plunkett G. III"/>
            <person name="Burland V."/>
            <person name="Mau B."/>
            <person name="Petrosino J.F."/>
            <person name="Qin X."/>
            <person name="Muzny D.M."/>
            <person name="Ayele M."/>
            <person name="Gibbs R.A."/>
            <person name="Csorgo B."/>
            <person name="Posfai G."/>
            <person name="Weinstock G.M."/>
            <person name="Blattner F.R."/>
        </authorList>
    </citation>
    <scope>NUCLEOTIDE SEQUENCE [LARGE SCALE GENOMIC DNA]</scope>
    <source>
        <strain>K12 / DH10B</strain>
    </source>
</reference>
<keyword id="KW-0687">Ribonucleoprotein</keyword>
<keyword id="KW-0689">Ribosomal protein</keyword>
<proteinExistence type="inferred from homology"/>
<dbReference type="EMBL" id="CP000948">
    <property type="protein sequence ID" value="ACB04262.1"/>
    <property type="molecule type" value="Genomic_DNA"/>
</dbReference>
<dbReference type="RefSeq" id="WP_000940595.1">
    <property type="nucleotide sequence ID" value="NC_010473.1"/>
</dbReference>
<dbReference type="SMR" id="B1XHG1"/>
<dbReference type="GeneID" id="93778796"/>
<dbReference type="KEGG" id="ecd:ECDH10B_3359"/>
<dbReference type="HOGENOM" id="CLU_095424_4_1_6"/>
<dbReference type="GO" id="GO:0022625">
    <property type="term" value="C:cytosolic large ribosomal subunit"/>
    <property type="evidence" value="ECO:0007669"/>
    <property type="project" value="TreeGrafter"/>
</dbReference>
<dbReference type="GO" id="GO:0003735">
    <property type="term" value="F:structural constituent of ribosome"/>
    <property type="evidence" value="ECO:0007669"/>
    <property type="project" value="InterPro"/>
</dbReference>
<dbReference type="GO" id="GO:0006412">
    <property type="term" value="P:translation"/>
    <property type="evidence" value="ECO:0007669"/>
    <property type="project" value="UniProtKB-UniRule"/>
</dbReference>
<dbReference type="FunFam" id="2.40.50.100:FF:000001">
    <property type="entry name" value="50S ribosomal protein L27"/>
    <property type="match status" value="1"/>
</dbReference>
<dbReference type="Gene3D" id="2.40.50.100">
    <property type="match status" value="1"/>
</dbReference>
<dbReference type="HAMAP" id="MF_00539">
    <property type="entry name" value="Ribosomal_bL27"/>
    <property type="match status" value="1"/>
</dbReference>
<dbReference type="InterPro" id="IPR001684">
    <property type="entry name" value="Ribosomal_bL27"/>
</dbReference>
<dbReference type="InterPro" id="IPR018261">
    <property type="entry name" value="Ribosomal_bL27_CS"/>
</dbReference>
<dbReference type="NCBIfam" id="TIGR00062">
    <property type="entry name" value="L27"/>
    <property type="match status" value="1"/>
</dbReference>
<dbReference type="PANTHER" id="PTHR15893:SF0">
    <property type="entry name" value="LARGE RIBOSOMAL SUBUNIT PROTEIN BL27M"/>
    <property type="match status" value="1"/>
</dbReference>
<dbReference type="PANTHER" id="PTHR15893">
    <property type="entry name" value="RIBOSOMAL PROTEIN L27"/>
    <property type="match status" value="1"/>
</dbReference>
<dbReference type="Pfam" id="PF01016">
    <property type="entry name" value="Ribosomal_L27"/>
    <property type="match status" value="1"/>
</dbReference>
<dbReference type="PRINTS" id="PR00063">
    <property type="entry name" value="RIBOSOMALL27"/>
</dbReference>
<dbReference type="SUPFAM" id="SSF110324">
    <property type="entry name" value="Ribosomal L27 protein-like"/>
    <property type="match status" value="1"/>
</dbReference>
<dbReference type="PROSITE" id="PS00831">
    <property type="entry name" value="RIBOSOMAL_L27"/>
    <property type="match status" value="1"/>
</dbReference>